<gene>
    <name evidence="4" type="primary">ndhM</name>
    <name evidence="1" type="synonym">NDH-M</name>
    <name type="ORF">PHYPADRAFT_170083</name>
</gene>
<organism>
    <name type="scientific">Physcomitrium patens</name>
    <name type="common">Spreading-leaved earth moss</name>
    <name type="synonym">Physcomitrella patens</name>
    <dbReference type="NCBI Taxonomy" id="3218"/>
    <lineage>
        <taxon>Eukaryota</taxon>
        <taxon>Viridiplantae</taxon>
        <taxon>Streptophyta</taxon>
        <taxon>Embryophyta</taxon>
        <taxon>Bryophyta</taxon>
        <taxon>Bryophytina</taxon>
        <taxon>Bryopsida</taxon>
        <taxon>Funariidae</taxon>
        <taxon>Funariales</taxon>
        <taxon>Funariaceae</taxon>
        <taxon>Physcomitrium</taxon>
    </lineage>
</organism>
<name>NDHM_PHYPA</name>
<keyword id="KW-0150">Chloroplast</keyword>
<keyword id="KW-0472">Membrane</keyword>
<keyword id="KW-0520">NAD</keyword>
<keyword id="KW-0521">NADP</keyword>
<keyword id="KW-0934">Plastid</keyword>
<keyword id="KW-0618">Plastoquinone</keyword>
<keyword id="KW-0874">Quinone</keyword>
<keyword id="KW-1185">Reference proteome</keyword>
<keyword id="KW-0793">Thylakoid</keyword>
<keyword id="KW-0809">Transit peptide</keyword>
<keyword id="KW-1278">Translocase</keyword>
<keyword id="KW-0813">Transport</keyword>
<dbReference type="EC" id="7.1.1.-" evidence="4"/>
<dbReference type="EMBL" id="DS545119">
    <property type="protein sequence ID" value="EDQ57191.1"/>
    <property type="molecule type" value="Genomic_DNA"/>
</dbReference>
<dbReference type="EMBL" id="FC386429">
    <property type="status" value="NOT_ANNOTATED_CDS"/>
    <property type="molecule type" value="mRNA"/>
</dbReference>
<dbReference type="RefSeq" id="XP_001777978.1">
    <property type="nucleotide sequence ID" value="XM_001777926.1"/>
</dbReference>
<dbReference type="SMR" id="A9THA7"/>
<dbReference type="FunCoup" id="A9THA7">
    <property type="interactions" value="1238"/>
</dbReference>
<dbReference type="PaxDb" id="3218-PP1S230_42V6.1"/>
<dbReference type="EnsemblPlants" id="Pp3c1_14910V3.1">
    <property type="protein sequence ID" value="Pp3c1_14910V3.1"/>
    <property type="gene ID" value="Pp3c1_14910"/>
</dbReference>
<dbReference type="EnsemblPlants" id="Pp3c1_14910V3.2">
    <property type="protein sequence ID" value="Pp3c1_14910V3.2"/>
    <property type="gene ID" value="Pp3c1_14910"/>
</dbReference>
<dbReference type="Gramene" id="Pp3c1_14910V3.1">
    <property type="protein sequence ID" value="Pp3c1_14910V3.1"/>
    <property type="gene ID" value="Pp3c1_14910"/>
</dbReference>
<dbReference type="Gramene" id="Pp3c1_14910V3.2">
    <property type="protein sequence ID" value="Pp3c1_14910V3.2"/>
    <property type="gene ID" value="Pp3c1_14910"/>
</dbReference>
<dbReference type="eggNOG" id="ENOG502QUN1">
    <property type="taxonomic scope" value="Eukaryota"/>
</dbReference>
<dbReference type="HOGENOM" id="CLU_1345188_0_0_1"/>
<dbReference type="InParanoid" id="A9THA7"/>
<dbReference type="OrthoDB" id="2013483at2759"/>
<dbReference type="Proteomes" id="UP000006727">
    <property type="component" value="Chromosome 1"/>
</dbReference>
<dbReference type="GO" id="GO:0009535">
    <property type="term" value="C:chloroplast thylakoid membrane"/>
    <property type="evidence" value="ECO:0007669"/>
    <property type="project" value="UniProtKB-SubCell"/>
</dbReference>
<dbReference type="GO" id="GO:0016655">
    <property type="term" value="F:oxidoreductase activity, acting on NAD(P)H, quinone or similar compound as acceptor"/>
    <property type="evidence" value="ECO:0007669"/>
    <property type="project" value="InterPro"/>
</dbReference>
<dbReference type="GO" id="GO:0048038">
    <property type="term" value="F:quinone binding"/>
    <property type="evidence" value="ECO:0007669"/>
    <property type="project" value="UniProtKB-KW"/>
</dbReference>
<dbReference type="GO" id="GO:0010258">
    <property type="term" value="P:NADH dehydrogenase complex (plastoquinone) assembly"/>
    <property type="evidence" value="ECO:0007669"/>
    <property type="project" value="EnsemblPlants"/>
</dbReference>
<dbReference type="InterPro" id="IPR018922">
    <property type="entry name" value="NdhM"/>
</dbReference>
<dbReference type="PANTHER" id="PTHR36900">
    <property type="entry name" value="NAD(P)H-QUINONE OXIDOREDUCTASE SUBUNIT M, CHLOROPLASTIC"/>
    <property type="match status" value="1"/>
</dbReference>
<dbReference type="PANTHER" id="PTHR36900:SF1">
    <property type="entry name" value="NAD(P)H-QUINONE OXIDOREDUCTASE SUBUNIT M, CHLOROPLASTIC"/>
    <property type="match status" value="1"/>
</dbReference>
<dbReference type="Pfam" id="PF10664">
    <property type="entry name" value="NdhM"/>
    <property type="match status" value="1"/>
</dbReference>
<evidence type="ECO:0000250" key="1">
    <source>
        <dbReference type="UniProtKB" id="Q2V2S7"/>
    </source>
</evidence>
<evidence type="ECO:0000250" key="2">
    <source>
        <dbReference type="UniProtKB" id="Q9CAC5"/>
    </source>
</evidence>
<evidence type="ECO:0000255" key="3"/>
<evidence type="ECO:0000305" key="4"/>
<proteinExistence type="evidence at transcript level"/>
<feature type="transit peptide" description="Chloroplast" evidence="3">
    <location>
        <begin position="1"/>
        <end position="27"/>
    </location>
</feature>
<feature type="chain" id="PRO_0000352666" description="NAD(P)H-quinone oxidoreductase subunit M, chloroplastic">
    <location>
        <begin position="28"/>
        <end position="204"/>
    </location>
</feature>
<protein>
    <recommendedName>
        <fullName evidence="4">NAD(P)H-quinone oxidoreductase subunit M, chloroplastic</fullName>
        <ecNumber evidence="4">7.1.1.-</ecNumber>
    </recommendedName>
    <alternativeName>
        <fullName evidence="4">NAD(P)H dehydrogenase subunit M</fullName>
        <shortName evidence="4">NDH subunit M</shortName>
        <shortName evidence="1">NDH-M</shortName>
    </alternativeName>
    <alternativeName>
        <fullName evidence="4">NADH-plastoquinone oxidoreductase subunit M</fullName>
    </alternativeName>
</protein>
<reference key="1">
    <citation type="journal article" date="2008" name="Science">
        <title>The Physcomitrella genome reveals evolutionary insights into the conquest of land by plants.</title>
        <authorList>
            <person name="Rensing S.A."/>
            <person name="Lang D."/>
            <person name="Zimmer A.D."/>
            <person name="Terry A."/>
            <person name="Salamov A."/>
            <person name="Shapiro H."/>
            <person name="Nishiyama T."/>
            <person name="Perroud P.-F."/>
            <person name="Lindquist E.A."/>
            <person name="Kamisugi Y."/>
            <person name="Tanahashi T."/>
            <person name="Sakakibara K."/>
            <person name="Fujita T."/>
            <person name="Oishi K."/>
            <person name="Shin-I T."/>
            <person name="Kuroki Y."/>
            <person name="Toyoda A."/>
            <person name="Suzuki Y."/>
            <person name="Hashimoto S.-I."/>
            <person name="Yamaguchi K."/>
            <person name="Sugano S."/>
            <person name="Kohara Y."/>
            <person name="Fujiyama A."/>
            <person name="Anterola A."/>
            <person name="Aoki S."/>
            <person name="Ashton N."/>
            <person name="Barbazuk W.B."/>
            <person name="Barker E."/>
            <person name="Bennetzen J.L."/>
            <person name="Blankenship R."/>
            <person name="Cho S.H."/>
            <person name="Dutcher S.K."/>
            <person name="Estelle M."/>
            <person name="Fawcett J.A."/>
            <person name="Gundlach H."/>
            <person name="Hanada K."/>
            <person name="Heyl A."/>
            <person name="Hicks K.A."/>
            <person name="Hughes J."/>
            <person name="Lohr M."/>
            <person name="Mayer K."/>
            <person name="Melkozernov A."/>
            <person name="Murata T."/>
            <person name="Nelson D.R."/>
            <person name="Pils B."/>
            <person name="Prigge M."/>
            <person name="Reiss B."/>
            <person name="Renner T."/>
            <person name="Rombauts S."/>
            <person name="Rushton P.J."/>
            <person name="Sanderfoot A."/>
            <person name="Schween G."/>
            <person name="Shiu S.-H."/>
            <person name="Stueber K."/>
            <person name="Theodoulou F.L."/>
            <person name="Tu H."/>
            <person name="Van de Peer Y."/>
            <person name="Verrier P.J."/>
            <person name="Waters E."/>
            <person name="Wood A."/>
            <person name="Yang L."/>
            <person name="Cove D."/>
            <person name="Cuming A.C."/>
            <person name="Hasebe M."/>
            <person name="Lucas S."/>
            <person name="Mishler B.D."/>
            <person name="Reski R."/>
            <person name="Grigoriev I.V."/>
            <person name="Quatrano R.S."/>
            <person name="Boore J.L."/>
        </authorList>
    </citation>
    <scope>NUCLEOTIDE SEQUENCE [LARGE SCALE GENOMIC DNA]</scope>
    <source>
        <strain>cv. Gransden 2004</strain>
    </source>
</reference>
<reference key="2">
    <citation type="submission" date="2007-12" db="EMBL/GenBank/DDBJ databases">
        <authorList>
            <consortium name="DOE Joint Genome Institute Physcomitrella patens EST project"/>
        </authorList>
    </citation>
    <scope>NUCLEOTIDE SEQUENCE [LARGE SCALE MRNA]</scope>
    <source>
        <strain>cv. Villersexel 2003</strain>
        <tissue>Protonema</tissue>
    </source>
</reference>
<accession>A9THA7</accession>
<comment type="function">
    <text evidence="4">NDH shuttles electrons from NAD(P)H:plastoquinone, via FMN and iron-sulfur (Fe-S) centers, to quinones in the photosynthetic chain and possibly in a chloroplast respiratory chain. The immediate electron acceptor for the enzyme in this species is believed to be plastoquinone. Couples the redox reaction to proton translocation, and thus conserves the redox energy in a proton gradient.</text>
</comment>
<comment type="catalytic activity">
    <reaction evidence="4">
        <text>a plastoquinone + NADH + (n+1) H(+)(in) = a plastoquinol + NAD(+) + n H(+)(out)</text>
        <dbReference type="Rhea" id="RHEA:42608"/>
        <dbReference type="Rhea" id="RHEA-COMP:9561"/>
        <dbReference type="Rhea" id="RHEA-COMP:9562"/>
        <dbReference type="ChEBI" id="CHEBI:15378"/>
        <dbReference type="ChEBI" id="CHEBI:17757"/>
        <dbReference type="ChEBI" id="CHEBI:57540"/>
        <dbReference type="ChEBI" id="CHEBI:57945"/>
        <dbReference type="ChEBI" id="CHEBI:62192"/>
    </reaction>
</comment>
<comment type="catalytic activity">
    <reaction evidence="4">
        <text>a plastoquinone + NADPH + (n+1) H(+)(in) = a plastoquinol + NADP(+) + n H(+)(out)</text>
        <dbReference type="Rhea" id="RHEA:42612"/>
        <dbReference type="Rhea" id="RHEA-COMP:9561"/>
        <dbReference type="Rhea" id="RHEA-COMP:9562"/>
        <dbReference type="ChEBI" id="CHEBI:15378"/>
        <dbReference type="ChEBI" id="CHEBI:17757"/>
        <dbReference type="ChEBI" id="CHEBI:57783"/>
        <dbReference type="ChEBI" id="CHEBI:58349"/>
        <dbReference type="ChEBI" id="CHEBI:62192"/>
    </reaction>
</comment>
<comment type="subunit">
    <text evidence="1">Part of the chloroplast NDH complex, composed of a mixture of chloroplast and nucleus encoded subunits. Component of the NDH subcomplex A, at least composed of ndhH, ndhI, ndhJ, ndhK, ndhL, ndhM, ndhN and ndhO.</text>
</comment>
<comment type="subcellular location">
    <subcellularLocation>
        <location evidence="2">Plastid</location>
        <location evidence="2">Chloroplast thylakoid membrane</location>
        <topology evidence="4">Peripheral membrane protein</topology>
        <orientation evidence="4">Stromal side</orientation>
    </subcellularLocation>
</comment>
<comment type="similarity">
    <text evidence="4">Belongs to the NDH complex subunit M family.</text>
</comment>
<sequence>MASTSMSLTRACKVHAVLACSIPSVSSAFLTTNVTFLGQPVEMPSQRWSQRRCSRPGPVTVRAEEVKEVTQAKGLSRESGGQWLSCTTRHVRIYAGYVDPETQVMDQSQLDKLTLMLDPDNEFEWPEEMVEKVYDKYRELVETYAGADLTEYTLRLIGSDLEHYIRKLLLAGELKYNLDCRVLNFSMGKPRIDPADLDDVEVEE</sequence>